<keyword id="KW-0687">Ribonucleoprotein</keyword>
<keyword id="KW-0689">Ribosomal protein</keyword>
<keyword id="KW-0694">RNA-binding</keyword>
<keyword id="KW-0699">rRNA-binding</keyword>
<gene>
    <name evidence="1" type="primary">rpsD</name>
    <name evidence="1" type="synonym">rps4</name>
    <name type="ordered locus">P9515_04711</name>
</gene>
<feature type="chain" id="PRO_0000293338" description="Small ribosomal subunit protein uS4">
    <location>
        <begin position="1"/>
        <end position="202"/>
    </location>
</feature>
<feature type="domain" description="S4 RNA-binding" evidence="1">
    <location>
        <begin position="90"/>
        <end position="152"/>
    </location>
</feature>
<feature type="region of interest" description="Disordered" evidence="2">
    <location>
        <begin position="1"/>
        <end position="42"/>
    </location>
</feature>
<feature type="compositionally biased region" description="Basic residues" evidence="2">
    <location>
        <begin position="1"/>
        <end position="13"/>
    </location>
</feature>
<accession>A2BV69</accession>
<sequence>MSRYRGPRLRVTRRLGELPGLTRKASKKSNPPGQHGQARRKRSEYAIRLEEKQKLRFNYGVSERQLVRYVKKARAQEGSTGTNLLRLLENRLDNVCFRLGFGGTIPGSRQLVNHGHVTVNGKVLDIAGYQCKSGDVISIKEKKASKKLVEGNIEFPGLANVPPHIELDKPKLTGKINGKCDREWVALEINELLVVEYYSRKV</sequence>
<proteinExistence type="inferred from homology"/>
<evidence type="ECO:0000255" key="1">
    <source>
        <dbReference type="HAMAP-Rule" id="MF_01306"/>
    </source>
</evidence>
<evidence type="ECO:0000256" key="2">
    <source>
        <dbReference type="SAM" id="MobiDB-lite"/>
    </source>
</evidence>
<evidence type="ECO:0000305" key="3"/>
<comment type="function">
    <text evidence="1">One of the primary rRNA binding proteins, it binds directly to 16S rRNA where it nucleates assembly of the body of the 30S subunit.</text>
</comment>
<comment type="function">
    <text evidence="1">With S5 and S12 plays an important role in translational accuracy.</text>
</comment>
<comment type="subunit">
    <text evidence="1">Part of the 30S ribosomal subunit. Contacts protein S5. The interaction surface between S4 and S5 is involved in control of translational fidelity.</text>
</comment>
<comment type="similarity">
    <text evidence="1">Belongs to the universal ribosomal protein uS4 family.</text>
</comment>
<protein>
    <recommendedName>
        <fullName evidence="1">Small ribosomal subunit protein uS4</fullName>
    </recommendedName>
    <alternativeName>
        <fullName evidence="3">30S ribosomal protein S4</fullName>
    </alternativeName>
</protein>
<organism>
    <name type="scientific">Prochlorococcus marinus (strain MIT 9515)</name>
    <dbReference type="NCBI Taxonomy" id="167542"/>
    <lineage>
        <taxon>Bacteria</taxon>
        <taxon>Bacillati</taxon>
        <taxon>Cyanobacteriota</taxon>
        <taxon>Cyanophyceae</taxon>
        <taxon>Synechococcales</taxon>
        <taxon>Prochlorococcaceae</taxon>
        <taxon>Prochlorococcus</taxon>
    </lineage>
</organism>
<dbReference type="EMBL" id="CP000552">
    <property type="protein sequence ID" value="ABM71680.1"/>
    <property type="molecule type" value="Genomic_DNA"/>
</dbReference>
<dbReference type="RefSeq" id="WP_011819788.1">
    <property type="nucleotide sequence ID" value="NC_008817.1"/>
</dbReference>
<dbReference type="SMR" id="A2BV69"/>
<dbReference type="STRING" id="167542.P9515_04711"/>
<dbReference type="GeneID" id="60201736"/>
<dbReference type="KEGG" id="pmc:P9515_04711"/>
<dbReference type="eggNOG" id="COG0522">
    <property type="taxonomic scope" value="Bacteria"/>
</dbReference>
<dbReference type="HOGENOM" id="CLU_092403_0_5_3"/>
<dbReference type="OrthoDB" id="9803672at2"/>
<dbReference type="Proteomes" id="UP000001589">
    <property type="component" value="Chromosome"/>
</dbReference>
<dbReference type="GO" id="GO:0015935">
    <property type="term" value="C:small ribosomal subunit"/>
    <property type="evidence" value="ECO:0007669"/>
    <property type="project" value="InterPro"/>
</dbReference>
<dbReference type="GO" id="GO:0019843">
    <property type="term" value="F:rRNA binding"/>
    <property type="evidence" value="ECO:0007669"/>
    <property type="project" value="UniProtKB-UniRule"/>
</dbReference>
<dbReference type="GO" id="GO:0003735">
    <property type="term" value="F:structural constituent of ribosome"/>
    <property type="evidence" value="ECO:0007669"/>
    <property type="project" value="InterPro"/>
</dbReference>
<dbReference type="GO" id="GO:0042274">
    <property type="term" value="P:ribosomal small subunit biogenesis"/>
    <property type="evidence" value="ECO:0007669"/>
    <property type="project" value="TreeGrafter"/>
</dbReference>
<dbReference type="GO" id="GO:0006412">
    <property type="term" value="P:translation"/>
    <property type="evidence" value="ECO:0007669"/>
    <property type="project" value="UniProtKB-UniRule"/>
</dbReference>
<dbReference type="CDD" id="cd00165">
    <property type="entry name" value="S4"/>
    <property type="match status" value="1"/>
</dbReference>
<dbReference type="FunFam" id="3.10.290.10:FF:000001">
    <property type="entry name" value="30S ribosomal protein S4"/>
    <property type="match status" value="1"/>
</dbReference>
<dbReference type="FunFam" id="1.10.1050.10:FF:000002">
    <property type="entry name" value="30S ribosomal protein S4, chloroplastic"/>
    <property type="match status" value="1"/>
</dbReference>
<dbReference type="Gene3D" id="1.10.1050.10">
    <property type="entry name" value="Ribosomal Protein S4 Delta 41, Chain A, domain 1"/>
    <property type="match status" value="1"/>
</dbReference>
<dbReference type="Gene3D" id="3.10.290.10">
    <property type="entry name" value="RNA-binding S4 domain"/>
    <property type="match status" value="1"/>
</dbReference>
<dbReference type="HAMAP" id="MF_01306_B">
    <property type="entry name" value="Ribosomal_uS4_B"/>
    <property type="match status" value="1"/>
</dbReference>
<dbReference type="InterPro" id="IPR022801">
    <property type="entry name" value="Ribosomal_uS4"/>
</dbReference>
<dbReference type="InterPro" id="IPR005709">
    <property type="entry name" value="Ribosomal_uS4_bac-type"/>
</dbReference>
<dbReference type="InterPro" id="IPR018079">
    <property type="entry name" value="Ribosomal_uS4_CS"/>
</dbReference>
<dbReference type="InterPro" id="IPR001912">
    <property type="entry name" value="Ribosomal_uS4_N"/>
</dbReference>
<dbReference type="InterPro" id="IPR002942">
    <property type="entry name" value="S4_RNA-bd"/>
</dbReference>
<dbReference type="InterPro" id="IPR036986">
    <property type="entry name" value="S4_RNA-bd_sf"/>
</dbReference>
<dbReference type="NCBIfam" id="NF003717">
    <property type="entry name" value="PRK05327.1"/>
    <property type="match status" value="1"/>
</dbReference>
<dbReference type="NCBIfam" id="TIGR01017">
    <property type="entry name" value="rpsD_bact"/>
    <property type="match status" value="1"/>
</dbReference>
<dbReference type="PANTHER" id="PTHR11831">
    <property type="entry name" value="30S 40S RIBOSOMAL PROTEIN"/>
    <property type="match status" value="1"/>
</dbReference>
<dbReference type="PANTHER" id="PTHR11831:SF4">
    <property type="entry name" value="SMALL RIBOSOMAL SUBUNIT PROTEIN US4M"/>
    <property type="match status" value="1"/>
</dbReference>
<dbReference type="Pfam" id="PF00163">
    <property type="entry name" value="Ribosomal_S4"/>
    <property type="match status" value="1"/>
</dbReference>
<dbReference type="Pfam" id="PF01479">
    <property type="entry name" value="S4"/>
    <property type="match status" value="1"/>
</dbReference>
<dbReference type="SMART" id="SM01390">
    <property type="entry name" value="Ribosomal_S4"/>
    <property type="match status" value="1"/>
</dbReference>
<dbReference type="SMART" id="SM00363">
    <property type="entry name" value="S4"/>
    <property type="match status" value="1"/>
</dbReference>
<dbReference type="SUPFAM" id="SSF55174">
    <property type="entry name" value="Alpha-L RNA-binding motif"/>
    <property type="match status" value="1"/>
</dbReference>
<dbReference type="PROSITE" id="PS00632">
    <property type="entry name" value="RIBOSOMAL_S4"/>
    <property type="match status" value="1"/>
</dbReference>
<dbReference type="PROSITE" id="PS50889">
    <property type="entry name" value="S4"/>
    <property type="match status" value="1"/>
</dbReference>
<reference key="1">
    <citation type="journal article" date="2007" name="PLoS Genet.">
        <title>Patterns and implications of gene gain and loss in the evolution of Prochlorococcus.</title>
        <authorList>
            <person name="Kettler G.C."/>
            <person name="Martiny A.C."/>
            <person name="Huang K."/>
            <person name="Zucker J."/>
            <person name="Coleman M.L."/>
            <person name="Rodrigue S."/>
            <person name="Chen F."/>
            <person name="Lapidus A."/>
            <person name="Ferriera S."/>
            <person name="Johnson J."/>
            <person name="Steglich C."/>
            <person name="Church G.M."/>
            <person name="Richardson P."/>
            <person name="Chisholm S.W."/>
        </authorList>
    </citation>
    <scope>NUCLEOTIDE SEQUENCE [LARGE SCALE GENOMIC DNA]</scope>
    <source>
        <strain>MIT 9515</strain>
    </source>
</reference>
<name>RS4_PROM5</name>